<accession>P27132</accession>
<evidence type="ECO:0000250" key="1">
    <source>
        <dbReference type="UniProtKB" id="Q8I4X0"/>
    </source>
</evidence>
<evidence type="ECO:0000305" key="2"/>
<name>ACT2_NAEFO</name>
<proteinExistence type="evidence at transcript level"/>
<feature type="chain" id="PRO_0000088967" description="Actin-2">
    <location>
        <begin position="1" status="less than"/>
        <end position="371"/>
    </location>
</feature>
<feature type="non-terminal residue">
    <location>
        <position position="1"/>
    </location>
</feature>
<keyword id="KW-0067">ATP-binding</keyword>
<keyword id="KW-0963">Cytoplasm</keyword>
<keyword id="KW-0206">Cytoskeleton</keyword>
<keyword id="KW-0378">Hydrolase</keyword>
<keyword id="KW-0547">Nucleotide-binding</keyword>
<organism>
    <name type="scientific">Naegleria fowleri</name>
    <name type="common">Brain eating amoeba</name>
    <dbReference type="NCBI Taxonomy" id="5763"/>
    <lineage>
        <taxon>Eukaryota</taxon>
        <taxon>Discoba</taxon>
        <taxon>Heterolobosea</taxon>
        <taxon>Tetramitia</taxon>
        <taxon>Eutetramitia</taxon>
        <taxon>Vahlkampfiidae</taxon>
        <taxon>Naegleria</taxon>
    </lineage>
</organism>
<protein>
    <recommendedName>
        <fullName>Actin-2</fullName>
        <ecNumber evidence="1">3.6.4.-</ecNumber>
    </recommendedName>
    <alternativeName>
        <fullName>Actin II</fullName>
    </alternativeName>
</protein>
<comment type="function">
    <text>Actins are highly conserved proteins that are involved in various types of cell motility and are ubiquitously expressed in all eukaryotic cells.</text>
</comment>
<comment type="catalytic activity">
    <reaction evidence="1">
        <text>ATP + H2O = ADP + phosphate + H(+)</text>
        <dbReference type="Rhea" id="RHEA:13065"/>
        <dbReference type="ChEBI" id="CHEBI:15377"/>
        <dbReference type="ChEBI" id="CHEBI:15378"/>
        <dbReference type="ChEBI" id="CHEBI:30616"/>
        <dbReference type="ChEBI" id="CHEBI:43474"/>
        <dbReference type="ChEBI" id="CHEBI:456216"/>
    </reaction>
</comment>
<comment type="subcellular location">
    <subcellularLocation>
        <location>Cytoplasm</location>
        <location>Cytoskeleton</location>
    </subcellularLocation>
</comment>
<comment type="similarity">
    <text evidence="2">Belongs to the actin family.</text>
</comment>
<dbReference type="EC" id="3.6.4.-" evidence="1"/>
<dbReference type="EMBL" id="M90312">
    <property type="protein sequence ID" value="AAA29383.1"/>
    <property type="molecule type" value="mRNA"/>
</dbReference>
<dbReference type="SMR" id="P27132"/>
<dbReference type="VEuPathDB" id="AmoebaDB:FDP41_006065"/>
<dbReference type="VEuPathDB" id="AmoebaDB:NF0132150"/>
<dbReference type="VEuPathDB" id="AmoebaDB:NfTy_067420"/>
<dbReference type="GO" id="GO:0005737">
    <property type="term" value="C:cytoplasm"/>
    <property type="evidence" value="ECO:0007669"/>
    <property type="project" value="UniProtKB-KW"/>
</dbReference>
<dbReference type="GO" id="GO:0005856">
    <property type="term" value="C:cytoskeleton"/>
    <property type="evidence" value="ECO:0007669"/>
    <property type="project" value="UniProtKB-SubCell"/>
</dbReference>
<dbReference type="GO" id="GO:0005524">
    <property type="term" value="F:ATP binding"/>
    <property type="evidence" value="ECO:0007669"/>
    <property type="project" value="UniProtKB-KW"/>
</dbReference>
<dbReference type="GO" id="GO:0016787">
    <property type="term" value="F:hydrolase activity"/>
    <property type="evidence" value="ECO:0007669"/>
    <property type="project" value="UniProtKB-KW"/>
</dbReference>
<dbReference type="CDD" id="cd10224">
    <property type="entry name" value="ASKHA_NBD_actin"/>
    <property type="match status" value="1"/>
</dbReference>
<dbReference type="FunFam" id="3.30.420.40:FF:000291">
    <property type="entry name" value="Actin, alpha skeletal muscle"/>
    <property type="match status" value="1"/>
</dbReference>
<dbReference type="FunFam" id="3.90.640.10:FF:000047">
    <property type="entry name" value="Actin, alpha skeletal muscle"/>
    <property type="match status" value="1"/>
</dbReference>
<dbReference type="FunFam" id="3.30.420.40:FF:000404">
    <property type="entry name" value="Major actin"/>
    <property type="match status" value="1"/>
</dbReference>
<dbReference type="FunFam" id="3.30.420.40:FF:000058">
    <property type="entry name" value="Putative actin-related protein 5"/>
    <property type="match status" value="1"/>
</dbReference>
<dbReference type="Gene3D" id="3.30.420.40">
    <property type="match status" value="2"/>
</dbReference>
<dbReference type="Gene3D" id="3.90.640.10">
    <property type="entry name" value="Actin, Chain A, domain 4"/>
    <property type="match status" value="1"/>
</dbReference>
<dbReference type="InterPro" id="IPR004000">
    <property type="entry name" value="Actin"/>
</dbReference>
<dbReference type="InterPro" id="IPR020902">
    <property type="entry name" value="Actin/actin-like_CS"/>
</dbReference>
<dbReference type="InterPro" id="IPR004001">
    <property type="entry name" value="Actin_CS"/>
</dbReference>
<dbReference type="InterPro" id="IPR043129">
    <property type="entry name" value="ATPase_NBD"/>
</dbReference>
<dbReference type="PANTHER" id="PTHR11937">
    <property type="entry name" value="ACTIN"/>
    <property type="match status" value="1"/>
</dbReference>
<dbReference type="Pfam" id="PF00022">
    <property type="entry name" value="Actin"/>
    <property type="match status" value="1"/>
</dbReference>
<dbReference type="PRINTS" id="PR00190">
    <property type="entry name" value="ACTIN"/>
</dbReference>
<dbReference type="SMART" id="SM00268">
    <property type="entry name" value="ACTIN"/>
    <property type="match status" value="1"/>
</dbReference>
<dbReference type="SUPFAM" id="SSF53067">
    <property type="entry name" value="Actin-like ATPase domain"/>
    <property type="match status" value="2"/>
</dbReference>
<dbReference type="PROSITE" id="PS00406">
    <property type="entry name" value="ACTINS_1"/>
    <property type="match status" value="1"/>
</dbReference>
<dbReference type="PROSITE" id="PS00432">
    <property type="entry name" value="ACTINS_2"/>
    <property type="match status" value="1"/>
</dbReference>
<dbReference type="PROSITE" id="PS01132">
    <property type="entry name" value="ACTINS_ACT_LIKE"/>
    <property type="match status" value="1"/>
</dbReference>
<reference key="1">
    <citation type="submission" date="1992-05" db="EMBL/GenBank/DDBJ databases">
        <title>Cloning and characterization of two virulent-related actin genes in Naegleria fowleri.</title>
        <authorList>
            <person name="Ahn J."/>
            <person name="Hu W.-N."/>
            <person name="Kopachik W.J."/>
            <person name="Band R.N."/>
        </authorList>
    </citation>
    <scope>NUCLEOTIDE SEQUENCE [MRNA]</scope>
    <source>
        <strain>ATCC 30894 / Lee</strain>
    </source>
</reference>
<sequence>VQALEVDNGSGMCKAGFAGDDAPGAVFPSIIGRPKQKSIMVGMGNKDAYVGDEVQSKRGILIFKYPIQHGIVTNWDDMEKIWHHTFYNELRVAPEEHPVLLTEAPLNPKANREKMTQIMFETFSVPAMYVAIQAVLSLYASGRTTGIVLDSGDGVSHTVPIYEGYALPHAILRLDLAGRDLTDYLIEDSHGTCYSFNTTAERECQRDIKGKALLYCFDFEQEMKIAAESSSVEKLYELPDGNVITVGNERFRCPEVLFQPNFIGMEAAGVHETTFNSIGKCDIHIRKDLYGNVVLSGGTTMFEGIAERMTKELTNMAPASMKIKVVAPPERKYSVWIGGSILASLSTFQQMWITKEEYEDAGPGIVHRESF</sequence>